<evidence type="ECO:0000269" key="1">
    <source>
    </source>
</evidence>
<evidence type="ECO:0000305" key="2"/>
<dbReference type="EC" id="2.7.8.-"/>
<dbReference type="EMBL" id="M27280">
    <property type="protein sequence ID" value="AAA24974.1"/>
    <property type="molecule type" value="Genomic_DNA"/>
</dbReference>
<dbReference type="EMBL" id="L42023">
    <property type="protein sequence ID" value="AAC23190.1"/>
    <property type="molecule type" value="Genomic_DNA"/>
</dbReference>
<dbReference type="PIR" id="D33465">
    <property type="entry name" value="D33465"/>
</dbReference>
<dbReference type="PIR" id="E64128">
    <property type="entry name" value="E64128"/>
</dbReference>
<dbReference type="RefSeq" id="NP_439689.1">
    <property type="nucleotide sequence ID" value="NC_000907.1"/>
</dbReference>
<dbReference type="STRING" id="71421.HI_1540"/>
<dbReference type="EnsemblBacteria" id="AAC23190">
    <property type="protein sequence ID" value="AAC23190"/>
    <property type="gene ID" value="HI_1540"/>
</dbReference>
<dbReference type="KEGG" id="hin:HI_1540"/>
<dbReference type="PATRIC" id="fig|71421.8.peg.1611"/>
<dbReference type="eggNOG" id="COG3475">
    <property type="taxonomic scope" value="Bacteria"/>
</dbReference>
<dbReference type="HOGENOM" id="CLU_075543_1_0_6"/>
<dbReference type="OrthoDB" id="9786100at2"/>
<dbReference type="PhylomeDB" id="P14184"/>
<dbReference type="BioCyc" id="HINF71421:G1GJ1-1560-MONOMER"/>
<dbReference type="BioCyc" id="MetaCyc:MONOMER-18962"/>
<dbReference type="Proteomes" id="UP000000579">
    <property type="component" value="Chromosome"/>
</dbReference>
<dbReference type="GO" id="GO:0016740">
    <property type="term" value="F:transferase activity"/>
    <property type="evidence" value="ECO:0007669"/>
    <property type="project" value="UniProtKB-KW"/>
</dbReference>
<dbReference type="GO" id="GO:0009100">
    <property type="term" value="P:glycoprotein metabolic process"/>
    <property type="evidence" value="ECO:0007669"/>
    <property type="project" value="UniProtKB-ARBA"/>
</dbReference>
<dbReference type="GO" id="GO:0009103">
    <property type="term" value="P:lipopolysaccharide biosynthetic process"/>
    <property type="evidence" value="ECO:0007669"/>
    <property type="project" value="UniProtKB-KW"/>
</dbReference>
<dbReference type="InterPro" id="IPR007074">
    <property type="entry name" value="LicD/FKTN/FKRP_NTP_transf"/>
</dbReference>
<dbReference type="InterPro" id="IPR052942">
    <property type="entry name" value="LPS_cholinephosphotransferase"/>
</dbReference>
<dbReference type="PANTHER" id="PTHR43404">
    <property type="entry name" value="LIPOPOLYSACCHARIDE CHOLINEPHOSPHOTRANSFERASE LICD"/>
    <property type="match status" value="1"/>
</dbReference>
<dbReference type="PANTHER" id="PTHR43404:SF2">
    <property type="entry name" value="LIPOPOLYSACCHARIDE CHOLINEPHOSPHOTRANSFERASE LICD"/>
    <property type="match status" value="1"/>
</dbReference>
<dbReference type="Pfam" id="PF04991">
    <property type="entry name" value="LicD"/>
    <property type="match status" value="1"/>
</dbReference>
<gene>
    <name type="primary">licD</name>
    <name type="ordered locus">HI_1540</name>
</gene>
<feature type="chain" id="PRO_0000204725" description="Lipopolysaccharide cholinephosphotransferase LicD">
    <location>
        <begin position="1"/>
        <end position="265"/>
    </location>
</feature>
<feature type="sequence conflict" description="In Ref. 1; AAA24974." evidence="2" ref="1">
    <original>YKIS</original>
    <variation>HQIH</variation>
    <location>
        <begin position="27"/>
        <end position="30"/>
    </location>
</feature>
<feature type="sequence conflict" description="In Ref. 1; AAA24974." evidence="2" ref="1">
    <original>H</original>
    <variation>Y</variation>
    <location>
        <position position="77"/>
    </location>
</feature>
<feature type="sequence conflict" description="In Ref. 1; AAA24974." evidence="2" ref="1">
    <original>M</original>
    <variation>I</variation>
    <location>
        <position position="80"/>
    </location>
</feature>
<feature type="sequence conflict" description="In Ref. 1; AAA24974." evidence="2" ref="1">
    <original>A</original>
    <variation>V</variation>
    <location>
        <position position="83"/>
    </location>
</feature>
<feature type="sequence conflict" description="In Ref. 1; AAA24974." evidence="2" ref="1">
    <original>Y</original>
    <variation>K</variation>
    <location>
        <position position="90"/>
    </location>
</feature>
<feature type="sequence conflict" description="In Ref. 1; AAA24974." evidence="2" ref="1">
    <original>DAKGRKSPMFM</original>
    <variation>EIAGKKSAMFI</variation>
    <location>
        <begin position="106"/>
        <end position="116"/>
    </location>
</feature>
<feature type="sequence conflict" description="In Ref. 1; AAA24974." evidence="2" ref="1">
    <original>E</original>
    <variation>D</variation>
    <location>
        <position position="127"/>
    </location>
</feature>
<feature type="sequence conflict" description="In Ref. 1; AAA24974." evidence="2" ref="1">
    <original>YPL</original>
    <variation>CSF</variation>
    <location>
        <begin position="132"/>
        <end position="134"/>
    </location>
</feature>
<feature type="sequence conflict" description="In Ref. 1; AAA24974." evidence="2" ref="1">
    <original>HRRIKLRFS</original>
    <variation>YRRTHRRFY</variation>
    <location>
        <begin position="138"/>
        <end position="146"/>
    </location>
</feature>
<feature type="sequence conflict" description="In Ref. 1; AAA24974." evidence="2" ref="1">
    <original>R</original>
    <variation>K</variation>
    <location>
        <position position="154"/>
    </location>
</feature>
<feature type="sequence conflict" description="In Ref. 1; AAA24974." evidence="2" ref="1">
    <original>VQ</original>
    <variation>LW</variation>
    <location>
        <begin position="160"/>
        <end position="161"/>
    </location>
</feature>
<feature type="sequence conflict" description="In Ref. 1; AAA24974." evidence="2" ref="1">
    <original>FL</original>
    <variation>LI</variation>
    <location>
        <begin position="171"/>
        <end position="172"/>
    </location>
</feature>
<feature type="sequence conflict" description="In Ref. 1; AAA24974." evidence="2" ref="1">
    <original>A</original>
    <variation>E</variation>
    <location>
        <position position="181"/>
    </location>
</feature>
<feature type="sequence conflict" description="In Ref. 1; AAA24974." evidence="2" ref="1">
    <original>K</original>
    <variation>T</variation>
    <location>
        <position position="186"/>
    </location>
</feature>
<feature type="sequence conflict" description="In Ref. 1." evidence="2" ref="1">
    <original>Y</original>
    <variation>YDDY</variation>
    <location>
        <position position="202"/>
    </location>
</feature>
<reference key="1">
    <citation type="journal article" date="1989" name="Cell">
        <title>The molecular mechanism of phase variation of H. influenzae lipopolysaccharide.</title>
        <authorList>
            <person name="Weiser J.N."/>
            <person name="Love J.M."/>
            <person name="Moxon E.R."/>
        </authorList>
    </citation>
    <scope>NUCLEOTIDE SEQUENCE [GENOMIC DNA]</scope>
    <source>
        <strain>RM 7004 / Serotype B</strain>
    </source>
</reference>
<reference key="2">
    <citation type="journal article" date="1995" name="Science">
        <title>Whole-genome random sequencing and assembly of Haemophilus influenzae Rd.</title>
        <authorList>
            <person name="Fleischmann R.D."/>
            <person name="Adams M.D."/>
            <person name="White O."/>
            <person name="Clayton R.A."/>
            <person name="Kirkness E.F."/>
            <person name="Kerlavage A.R."/>
            <person name="Bult C.J."/>
            <person name="Tomb J.-F."/>
            <person name="Dougherty B.A."/>
            <person name="Merrick J.M."/>
            <person name="McKenney K."/>
            <person name="Sutton G.G."/>
            <person name="FitzHugh W."/>
            <person name="Fields C.A."/>
            <person name="Gocayne J.D."/>
            <person name="Scott J.D."/>
            <person name="Shirley R."/>
            <person name="Liu L.-I."/>
            <person name="Glodek A."/>
            <person name="Kelley J.M."/>
            <person name="Weidman J.F."/>
            <person name="Phillips C.A."/>
            <person name="Spriggs T."/>
            <person name="Hedblom E."/>
            <person name="Cotton M.D."/>
            <person name="Utterback T.R."/>
            <person name="Hanna M.C."/>
            <person name="Nguyen D.T."/>
            <person name="Saudek D.M."/>
            <person name="Brandon R.C."/>
            <person name="Fine L.D."/>
            <person name="Fritchman J.L."/>
            <person name="Fuhrmann J.L."/>
            <person name="Geoghagen N.S.M."/>
            <person name="Gnehm C.L."/>
            <person name="McDonald L.A."/>
            <person name="Small K.V."/>
            <person name="Fraser C.M."/>
            <person name="Smith H.O."/>
            <person name="Venter J.C."/>
        </authorList>
    </citation>
    <scope>NUCLEOTIDE SEQUENCE [LARGE SCALE GENOMIC DNA]</scope>
    <source>
        <strain>ATCC 51907 / DSM 11121 / KW20 / Rd</strain>
    </source>
</reference>
<reference key="3">
    <citation type="journal article" date="2000" name="Mol. Microbiol.">
        <title>The position of phosphorylcholine on the lipopolysaccharide of Haemophilus influenzae affects binding and sensitivity to C-reactive protein-mediated killing.</title>
        <authorList>
            <person name="Lysenko E."/>
            <person name="Richards J.C."/>
            <person name="Cox A.D."/>
            <person name="Stewart A."/>
            <person name="Martin A."/>
            <person name="Kapoor M."/>
            <person name="Weiser J.N."/>
        </authorList>
    </citation>
    <scope>FUNCTION</scope>
</reference>
<proteinExistence type="inferred from homology"/>
<accession>P14184</accession>
<accession>P71393</accession>
<comment type="function">
    <text evidence="1">Transfers phosphorylcholine (ChoP) from choline diphosphonucleoside to the lipopolysaccharide (LPS).</text>
</comment>
<comment type="miscellaneous">
    <text>Lipopolysaccharide (LPS) is a glycolipid that is a necessary component and antigenic determinant of the outer membrane and has been shown to be an important factor in the host-parasite interaction in a number of Gram-negative species.</text>
</comment>
<comment type="miscellaneous">
    <text>H.influenzae is able to display an extensive repertoire of different surface configurations through variability of its LPS oligosaccharide.</text>
</comment>
<comment type="miscellaneous">
    <text>LicD is required for the expression of the 12D9-specific epitope.</text>
</comment>
<comment type="similarity">
    <text evidence="2">Belongs to the LicD transferase family.</text>
</comment>
<name>LICD_HAEIN</name>
<organism>
    <name type="scientific">Haemophilus influenzae (strain ATCC 51907 / DSM 11121 / KW20 / Rd)</name>
    <dbReference type="NCBI Taxonomy" id="71421"/>
    <lineage>
        <taxon>Bacteria</taxon>
        <taxon>Pseudomonadati</taxon>
        <taxon>Pseudomonadota</taxon>
        <taxon>Gammaproteobacteria</taxon>
        <taxon>Pasteurellales</taxon>
        <taxon>Pasteurellaceae</taxon>
        <taxon>Haemophilus</taxon>
    </lineage>
</organism>
<sequence>MKKLTLREQQLVCLNILDYFHALCERYKISYSLGGGTLIGAIRHKGFIPWDDDIDVYMHRDEYQRFVDVWFQETHEHYNMETAEDILAQYTGEMAKIFDCRTQITDAKGRKSPMFMDIFIYDGVPNEPKIIYPLMKKHRRIKLRFSSCKKRWLRAKENTVQKAILNKLSHFLFSKMQKNLAQFQIKYPIKQCDYIGLVLSDYGGWQKSYMPKEYFNHVIYKEFEGRQFQVMNGYHEHLTQYYGDYMKLPPEEDQKPHHIQEAYIL</sequence>
<keyword id="KW-0448">Lipopolysaccharide biosynthesis</keyword>
<keyword id="KW-1185">Reference proteome</keyword>
<keyword id="KW-0808">Transferase</keyword>
<protein>
    <recommendedName>
        <fullName>Lipopolysaccharide cholinephosphotransferase LicD</fullName>
        <ecNumber>2.7.8.-</ecNumber>
    </recommendedName>
</protein>